<gene>
    <name type="primary">env</name>
</gene>
<evidence type="ECO:0000250" key="1"/>
<evidence type="ECO:0000255" key="2"/>
<evidence type="ECO:0000256" key="3">
    <source>
        <dbReference type="SAM" id="MobiDB-lite"/>
    </source>
</evidence>
<evidence type="ECO:0000305" key="4"/>
<dbReference type="EMBL" id="M29975">
    <property type="protein sequence ID" value="AAA91911.1"/>
    <property type="molecule type" value="Genomic_RNA"/>
</dbReference>
<dbReference type="SMR" id="P27757"/>
<dbReference type="GlyCosmos" id="P27757">
    <property type="glycosylation" value="21 sites, No reported glycans"/>
</dbReference>
<dbReference type="Proteomes" id="UP000258159">
    <property type="component" value="Segment"/>
</dbReference>
<dbReference type="GO" id="GO:0044175">
    <property type="term" value="C:host cell endosome membrane"/>
    <property type="evidence" value="ECO:0007669"/>
    <property type="project" value="UniProtKB-SubCell"/>
</dbReference>
<dbReference type="GO" id="GO:0020002">
    <property type="term" value="C:host cell plasma membrane"/>
    <property type="evidence" value="ECO:0007669"/>
    <property type="project" value="UniProtKB-SubCell"/>
</dbReference>
<dbReference type="GO" id="GO:0016020">
    <property type="term" value="C:membrane"/>
    <property type="evidence" value="ECO:0007669"/>
    <property type="project" value="UniProtKB-KW"/>
</dbReference>
<dbReference type="GO" id="GO:0019031">
    <property type="term" value="C:viral envelope"/>
    <property type="evidence" value="ECO:0007669"/>
    <property type="project" value="UniProtKB-KW"/>
</dbReference>
<dbReference type="GO" id="GO:0055036">
    <property type="term" value="C:virion membrane"/>
    <property type="evidence" value="ECO:0007669"/>
    <property type="project" value="UniProtKB-SubCell"/>
</dbReference>
<dbReference type="GO" id="GO:0005198">
    <property type="term" value="F:structural molecule activity"/>
    <property type="evidence" value="ECO:0007669"/>
    <property type="project" value="InterPro"/>
</dbReference>
<dbReference type="GO" id="GO:0039663">
    <property type="term" value="P:membrane fusion involved in viral entry into host cell"/>
    <property type="evidence" value="ECO:0007669"/>
    <property type="project" value="UniProtKB-KW"/>
</dbReference>
<dbReference type="GO" id="GO:0046718">
    <property type="term" value="P:symbiont entry into host cell"/>
    <property type="evidence" value="ECO:0007669"/>
    <property type="project" value="UniProtKB-KW"/>
</dbReference>
<dbReference type="GO" id="GO:0019062">
    <property type="term" value="P:virion attachment to host cell"/>
    <property type="evidence" value="ECO:0007669"/>
    <property type="project" value="UniProtKB-KW"/>
</dbReference>
<dbReference type="CDD" id="cd09909">
    <property type="entry name" value="HIV-1-like_HR1-HR2"/>
    <property type="match status" value="1"/>
</dbReference>
<dbReference type="Gene3D" id="1.10.287.210">
    <property type="match status" value="1"/>
</dbReference>
<dbReference type="Gene3D" id="2.170.40.20">
    <property type="entry name" value="Human immunodeficiency virus 1, Gp160, envelope glycoprotein"/>
    <property type="match status" value="2"/>
</dbReference>
<dbReference type="InterPro" id="IPR036377">
    <property type="entry name" value="Gp120_core_sf"/>
</dbReference>
<dbReference type="InterPro" id="IPR000328">
    <property type="entry name" value="GP41-like"/>
</dbReference>
<dbReference type="InterPro" id="IPR000777">
    <property type="entry name" value="HIV1_Gp120"/>
</dbReference>
<dbReference type="Pfam" id="PF00516">
    <property type="entry name" value="GP120"/>
    <property type="match status" value="1"/>
</dbReference>
<dbReference type="Pfam" id="PF00517">
    <property type="entry name" value="GP41"/>
    <property type="match status" value="1"/>
</dbReference>
<dbReference type="SUPFAM" id="SSF56502">
    <property type="entry name" value="gp120 core"/>
    <property type="match status" value="1"/>
</dbReference>
<dbReference type="SUPFAM" id="SSF58069">
    <property type="entry name" value="Virus ectodomain"/>
    <property type="match status" value="1"/>
</dbReference>
<proteinExistence type="inferred from homology"/>
<sequence length="768" mass="86859">MTKFLGIFIVLGIGIGIGISTKQQWITVFYGVPVWKNSSVQAFCMTPTTRLWATTNCIPDDHDYTEVPLNITEPFEAWADRNPLVAQAGSNIHLLFEQTLKPCVKLSPLCIKMNCVELKGSATSTPATSTTAGTKLPCVRNKTDSNLQSCNDTIIEKEMNDEAASNCTFAMAGYIRDQKKNYSVVWNDAEIFCKRSTSHNGTKECYMIHCNDSVIKEACDKTYWDELRLRYCAPAGYALLKCNDWDYAGFKPECSNVSVVHCTTLMNTTVTTGLLLNGSYSENRTQIWQKHGVSNDSVLILLNKHYNLTVTCKRPGNKTVLPVTIMAGLVFHSQKYNTRLRQAWCHFQGNWKGAWKEVQEEIVKLPKERYQGTNDTNKIFLQRQFGDPEAANLWFNCQGEFFYCKMDWFLNYLNNLTVDADHNHCKNNAGKGRSPGPCVQRTYVACHIRSVINDWYTISKKTYAPPREGHLQCTSTVTGMTVELNYNNQNRTNVTLSPQIETIWAAELGRYKLVEITPIGFAPTEVRRYTGGQERQKRVPFVLGFLGFLGAAGTAMGAAATALTVQSQHLLAGILQQQKNLLAAVGAQQQMLKLTIWGVKNLNARVTALEKYLADQARLNAWGCAWKQVCHTTVPWTWNNTPEWNNMTWLEWEKQIEGLEGNITKQLEQAREQEEKNLDAYQKLSDWSSFWSWFDFSKWLNILKIGFLAVIGVIGLRLLYTLYTCIARVRQGYSPLSPQIHIHPWKGQPDNAGEPEEGGRTGKSKSTH</sequence>
<protein>
    <recommendedName>
        <fullName>Envelope glycoprotein gp160</fullName>
    </recommendedName>
    <alternativeName>
        <fullName>Env polyprotein</fullName>
    </alternativeName>
    <component>
        <recommendedName>
            <fullName>Surface protein gp120</fullName>
            <shortName>SU</shortName>
        </recommendedName>
        <alternativeName>
            <fullName>Glycoprotein 120</fullName>
            <shortName>gp120</shortName>
        </alternativeName>
    </component>
    <component>
        <recommendedName>
            <fullName>Transmembrane protein gp41</fullName>
            <shortName>TM</shortName>
        </recommendedName>
        <alternativeName>
            <fullName>Glycoprotein 32</fullName>
            <shortName>gp32</shortName>
        </alternativeName>
    </component>
</protein>
<organism>
    <name type="scientific">Simian immunodeficiency virus agm.vervet (isolate AGM155)</name>
    <name type="common">SIV-agm.ver</name>
    <name type="synonym">Simian immunodeficiency virus African green monkey vervet</name>
    <dbReference type="NCBI Taxonomy" id="11727"/>
    <lineage>
        <taxon>Viruses</taxon>
        <taxon>Riboviria</taxon>
        <taxon>Pararnavirae</taxon>
        <taxon>Artverviricota</taxon>
        <taxon>Revtraviricetes</taxon>
        <taxon>Ortervirales</taxon>
        <taxon>Retroviridae</taxon>
        <taxon>Orthoretrovirinae</taxon>
        <taxon>Lentivirus</taxon>
        <taxon>Simian immunodeficiency virus</taxon>
    </lineage>
</organism>
<comment type="function">
    <text evidence="1">The surface protein gp120 (SU) attaches the virus to the host lymphoid cell by binding to the primary receptor CD4. This interaction induces a structural rearrangement creating a high affinity binding site for a chemokine coreceptor like CCR5. This peculiar 2 stage receptor-interaction strategy allows gp120 to maintain the highly conserved coreceptor-binding site in a cryptic conformation, protected from neutralizing antibodies. These changes are transmitted to the transmembrane protein gp41 and are thought to activate its fusogenic potential by unmasking its fusion peptide (By similarity).</text>
</comment>
<comment type="function">
    <text evidence="1">Surface protein gp120 (SU) may target the virus to gut-associated lymphoid tissue (GALT) by binding host ITGA4/ITGB7 (alpha-4/beta-7 integrins), a complex that mediates T-cell migration to the GALT. Interaction between gp120 and ITGA4/ITGB7 would allow the virus to enter GALT early in the infection, infecting and killing most of GALT's resting CD4+ T-cells. This T-cell depletion is believed to be the major insult to the host immune system leading to AIDS (By similarity).</text>
</comment>
<comment type="function">
    <text evidence="1">The surface protein gp120 is a ligand for CD209/DC-SIGN and CLEC4M/DC-SIGNR, which are respectively found on dendritic cells (DCs), and on endothelial cells of liver sinusoids and lymph node sinuses. These interactions allow capture of viral particles at mucosal surfaces by these cells and subsequent transmission to permissive cells. DCs are professional antigen presenting cells, critical for host immunity by inducing specific immune responses against a broad variety of pathogens. They act as sentinels in various tissues where they take up antigen, process it, and present it to T-cells following migration to lymphoid organs. SIV subverts the migration properties of dendritic cells to gain access to CD4+ T-cells in lymph nodes. Virus transmission to permissive T-cells occurs either in trans (without DCs infection, through viral capture and transmission), or in cis (following DCs productive infection, through the usual CD4-gp120 interaction), thereby inducing a robust infection. In trans infection, bound virions remain infectious over days and it is proposed that they are not degraded, but protected in non-lysosomal acidic organelles within the DCs close to the cell membrane thus contributing to the viral infectious potential during DCs' migration from the periphery to the lymphoid tissues. On arrival at lymphoid tissues, intact virions recycle back to DCs' cell surface allowing virus transmission to CD4+ T-cells. Virion capture also seems to lead to MHC-II-restricted viral antigen presentation, and probably to the activation of SIV-specific CD4+ cells (By similarity).</text>
</comment>
<comment type="function">
    <text evidence="1">The transmembrane protein gp41 (TM) acts as a class I viral fusion protein. Under the current model, the protein has at least 3 conformational states: pre-fusion native state, pre-hairpin intermediate state, and post-fusion hairpin state. During fusion of viral and target intracellular membranes, the coiled coil regions (heptad repeats) assume a trimer-of-hairpins structure, positioning the fusion peptide in close proximity to the C-terminal region of the ectodomain. The formation of this structure appears to drive apposition and subsequent fusion of viral and target cell membranes. Complete fusion occurs in host cell endosomes. The virus undergoes clathrin-dependent internalization long before endosomal fusion, thus minimizing the surface exposure of conserved viral epitopes during fusion and reducing the efficacy of inhibitors targeting these epitopes. Membranes fusion leads to delivery of the nucleocapsid into the cytoplasm (By similarity).</text>
</comment>
<comment type="function">
    <text evidence="1">The envelope glycoprotein gp160 precursor down-modulates cell surface CD4 antigen by interacting with it in the endoplasmic reticulum and blocking its transport to the cell surface.</text>
</comment>
<comment type="function">
    <text evidence="1">The gp120-gp41 heterodimer allows rapid transcytosis of the virus through CD4 negative cells such as simple epithelial monolayers of the intestinal, rectal and endocervical epithelial barriers. Both gp120 and gp41 specifically recognize glycosphingolipids galactosyl-ceramide (GalCer) or 3' sulfo-galactosyl-ceramide (GalS) present in the lipid rafts structures of epithelial cells. Binding to these alternative receptors allows the rapid transcytosis of the virus through the epithelial cells. This transcytotic vesicle-mediated transport of virions from the apical side to the basolateral side of the epithelial cells does not involve infection of the cells themselves (By similarity).</text>
</comment>
<comment type="subunit">
    <molecule>Surface protein gp120</molecule>
    <text evidence="1">The mature envelope protein (Env) consists of a homotrimer of non-covalently associated gp120-gp41 heterodimers. The resulting complex protrudes from the virus surface as a spike. Interacts with host CD4 and CCR5 (By similarity). Gp120 also interacts with the C-type lectins CD209/DC-SIGN and CLEC4M/DC-SIGNR (collectively referred to as DC-SIGN(R)).</text>
</comment>
<comment type="subunit">
    <molecule>Transmembrane protein gp41</molecule>
    <text evidence="1">The mature envelope protein (Env) consists of a homotrimer of non-covalently associated gp120-gp41 heterodimers. The resulting complex protrudes from the virus surface as a spike.</text>
</comment>
<comment type="subcellular location">
    <molecule>Transmembrane protein gp41</molecule>
    <subcellularLocation>
        <location evidence="1">Virion membrane</location>
        <topology evidence="1">Single-pass type I membrane protein</topology>
    </subcellularLocation>
    <subcellularLocation>
        <location evidence="1">Host cell membrane</location>
        <topology evidence="1">Single-pass type I membrane protein</topology>
    </subcellularLocation>
    <subcellularLocation>
        <location evidence="4">Host endosome membrane</location>
        <topology evidence="4">Single-pass type I membrane protein</topology>
    </subcellularLocation>
    <text evidence="1">It is probably concentrated at the site of budding and incorporated into the virions possibly by contacts between the cytoplasmic tail of Env and the N-terminus of Gag.</text>
</comment>
<comment type="subcellular location">
    <molecule>Surface protein gp120</molecule>
    <subcellularLocation>
        <location evidence="1">Virion membrane</location>
        <topology evidence="1">Peripheral membrane protein</topology>
    </subcellularLocation>
    <subcellularLocation>
        <location evidence="1">Host cell membrane</location>
        <topology evidence="1">Peripheral membrane protein</topology>
    </subcellularLocation>
    <subcellularLocation>
        <location evidence="4">Host endosome membrane</location>
        <topology evidence="4">Peripheral membrane protein</topology>
    </subcellularLocation>
    <text evidence="1">The surface protein is not anchored to the viral envelope, but associates with the extravirion surface through its binding to TM. It is probably concentrated at the site of budding and incorporated into the virions possibly by contacts between the cytoplasmic tail of Env and the N-terminus of Gag (By similarity).</text>
</comment>
<comment type="domain">
    <text evidence="1">Some of the most genetically diverse regions of the viral genome are present in Env. They are called variable regions 1 through 5 (V1 through V5) (By similarity).</text>
</comment>
<comment type="domain">
    <text evidence="1">The YXXL motif is involved in determining the exact site of viral release at the surface of infected mononuclear cells and promotes endocytosis. YXXL and di-leucine endocytosis motifs interact directly or indirectly with the clathrin adapter complexes, opperate independently, and their activities are not additive (By similarity).</text>
</comment>
<comment type="domain">
    <text evidence="1">The 17 amino acids long immunosuppressive region is present in many retroviral envelope proteins. Synthetic peptides derived from this relatively conserved sequence inhibit immune function in vitro and in vivo (By similarity).</text>
</comment>
<comment type="PTM">
    <text evidence="1">Specific enzymatic cleavages in vivo yield mature proteins. Envelope glycoproteins are synthesized as an inactive precursor that is heavily N-glycosylated and processed likely by host cell furin in the Golgi to yield the mature SU and TM proteins. The cleavage site between SU and TM requires the minimal sequence [KR]-X-[KR]-R (By similarity).</text>
</comment>
<comment type="miscellaneous">
    <text>The 155 isolate is from a monkey imported from Kenya.</text>
</comment>
<reference key="1">
    <citation type="journal article" date="1990" name="J. Virol.">
        <title>Simian immunodeficiency viruses from African green monkeys display unusual genetic diversity.</title>
        <authorList>
            <person name="Johnson P.R."/>
            <person name="Fomsgaard A."/>
            <person name="Allan J.S."/>
            <person name="Gravell M."/>
            <person name="London W.T."/>
            <person name="Olmstead R.A."/>
            <person name="Hirsch V.M."/>
        </authorList>
    </citation>
    <scope>NUCLEOTIDE SEQUENCE [GENOMIC RNA]</scope>
</reference>
<organismHost>
    <name type="scientific">Cercopithecidae</name>
    <name type="common">Old World monkeys</name>
    <dbReference type="NCBI Taxonomy" id="9527"/>
</organismHost>
<feature type="signal peptide" evidence="2">
    <location>
        <begin position="1"/>
        <end position="16"/>
    </location>
</feature>
<feature type="chain" id="PRO_0000239505" description="Envelope glycoprotein gp160">
    <location>
        <begin position="17"/>
        <end position="768"/>
    </location>
</feature>
<feature type="chain" id="PRO_0000038456" description="Surface protein gp120" evidence="1">
    <location>
        <begin position="17"/>
        <end position="538"/>
    </location>
</feature>
<feature type="chain" id="PRO_0000038457" description="Transmembrane protein gp41" evidence="1">
    <location>
        <begin position="539"/>
        <end position="768"/>
    </location>
</feature>
<feature type="topological domain" description="Extracellular" evidence="2">
    <location>
        <begin position="17"/>
        <end position="701"/>
    </location>
</feature>
<feature type="transmembrane region" description="Helical" evidence="2">
    <location>
        <begin position="702"/>
        <end position="722"/>
    </location>
</feature>
<feature type="topological domain" description="Cytoplasmic" evidence="2">
    <location>
        <begin position="723"/>
        <end position="768"/>
    </location>
</feature>
<feature type="region of interest" description="V1">
    <location>
        <begin position="115"/>
        <end position="166"/>
    </location>
</feature>
<feature type="region of interest" description="V2">
    <location>
        <begin position="167"/>
        <end position="210"/>
    </location>
</feature>
<feature type="region of interest" description="V3">
    <location>
        <begin position="312"/>
        <end position="344"/>
    </location>
</feature>
<feature type="region of interest" description="V4">
    <location>
        <begin position="404"/>
        <end position="446"/>
    </location>
</feature>
<feature type="region of interest" description="V5">
    <location>
        <begin position="489"/>
        <end position="496"/>
    </location>
</feature>
<feature type="region of interest" description="Fusion peptide" evidence="2">
    <location>
        <begin position="539"/>
        <end position="559"/>
    </location>
</feature>
<feature type="region of interest" description="Immunosuppression" evidence="1">
    <location>
        <begin position="602"/>
        <end position="618"/>
    </location>
</feature>
<feature type="region of interest" description="MPER; binding to GalCer" evidence="1">
    <location>
        <begin position="683"/>
        <end position="704"/>
    </location>
</feature>
<feature type="region of interest" description="Disordered" evidence="3">
    <location>
        <begin position="744"/>
        <end position="768"/>
    </location>
</feature>
<feature type="coiled-coil region" evidence="2">
    <location>
        <begin position="650"/>
        <end position="687"/>
    </location>
</feature>
<feature type="short sequence motif" description="YXXL motif; contains endocytosis signal" evidence="1">
    <location>
        <begin position="733"/>
        <end position="736"/>
    </location>
</feature>
<feature type="site" description="Cleavage; by host furin" evidence="2">
    <location>
        <begin position="538"/>
        <end position="539"/>
    </location>
</feature>
<feature type="glycosylation site" description="N-linked (GlcNAc...) asparagine; by host" evidence="2">
    <location>
        <position position="37"/>
    </location>
</feature>
<feature type="glycosylation site" description="N-linked (GlcNAc...) asparagine; by host" evidence="2">
    <location>
        <position position="70"/>
    </location>
</feature>
<feature type="glycosylation site" description="N-linked (GlcNAc...) asparagine; by host" evidence="2">
    <location>
        <position position="141"/>
    </location>
</feature>
<feature type="glycosylation site" description="N-linked (GlcNAc...) asparagine; by host" evidence="2">
    <location>
        <position position="151"/>
    </location>
</feature>
<feature type="glycosylation site" description="N-linked (GlcNAc...) asparagine; by host" evidence="2">
    <location>
        <position position="166"/>
    </location>
</feature>
<feature type="glycosylation site" description="N-linked (GlcNAc...) asparagine; by host" evidence="2">
    <location>
        <position position="181"/>
    </location>
</feature>
<feature type="glycosylation site" description="N-linked (GlcNAc...) asparagine; by host" evidence="2">
    <location>
        <position position="200"/>
    </location>
</feature>
<feature type="glycosylation site" description="N-linked (GlcNAc...) asparagine; by host" evidence="2">
    <location>
        <position position="211"/>
    </location>
</feature>
<feature type="glycosylation site" description="N-linked (GlcNAc...) asparagine; by host" evidence="2">
    <location>
        <position position="256"/>
    </location>
</feature>
<feature type="glycosylation site" description="N-linked (GlcNAc...) asparagine; by host" evidence="2">
    <location>
        <position position="267"/>
    </location>
</feature>
<feature type="glycosylation site" description="N-linked (GlcNAc...) asparagine; by host" evidence="2">
    <location>
        <position position="277"/>
    </location>
</feature>
<feature type="glycosylation site" description="N-linked (GlcNAc...) asparagine; by host" evidence="2">
    <location>
        <position position="283"/>
    </location>
</feature>
<feature type="glycosylation site" description="N-linked (GlcNAc...) asparagine; by host" evidence="2">
    <location>
        <position position="295"/>
    </location>
</feature>
<feature type="glycosylation site" description="N-linked (GlcNAc...) asparagine; by host" evidence="2">
    <location>
        <position position="307"/>
    </location>
</feature>
<feature type="glycosylation site" description="N-linked (GlcNAc...) asparagine; by host" evidence="2">
    <location>
        <position position="317"/>
    </location>
</feature>
<feature type="glycosylation site" description="N-linked (GlcNAc...) asparagine; by host" evidence="2">
    <location>
        <position position="374"/>
    </location>
</feature>
<feature type="glycosylation site" description="N-linked (GlcNAc...) asparagine; by host" evidence="2">
    <location>
        <position position="415"/>
    </location>
</feature>
<feature type="glycosylation site" description="N-linked (GlcNAc...) asparagine; by host" evidence="2">
    <location>
        <position position="490"/>
    </location>
</feature>
<feature type="glycosylation site" description="N-linked (GlcNAc...) asparagine; by host" evidence="2">
    <location>
        <position position="493"/>
    </location>
</feature>
<feature type="glycosylation site" description="N-linked (GlcNAc...) asparagine; by host" evidence="2">
    <location>
        <position position="646"/>
    </location>
</feature>
<feature type="glycosylation site" description="N-linked (GlcNAc...) asparagine; by host" evidence="2">
    <location>
        <position position="662"/>
    </location>
</feature>
<feature type="disulfide bond" evidence="1">
    <location>
        <begin position="44"/>
        <end position="57"/>
    </location>
</feature>
<feature type="disulfide bond" evidence="1">
    <location>
        <begin position="103"/>
        <end position="219"/>
    </location>
</feature>
<feature type="disulfide bond" evidence="1">
    <location>
        <begin position="110"/>
        <end position="210"/>
    </location>
</feature>
<feature type="disulfide bond" evidence="1">
    <location>
        <begin position="115"/>
        <end position="167"/>
    </location>
</feature>
<feature type="disulfide bond" evidence="1">
    <location>
        <begin position="232"/>
        <end position="262"/>
    </location>
</feature>
<feature type="disulfide bond" evidence="1">
    <location>
        <begin position="242"/>
        <end position="254"/>
    </location>
</feature>
<feature type="disulfide bond" evidence="1">
    <location>
        <begin position="312"/>
        <end position="345"/>
    </location>
</feature>
<feature type="disulfide bond" evidence="1">
    <location>
        <begin position="397"/>
        <end position="473"/>
    </location>
</feature>
<feature type="disulfide bond" evidence="1">
    <location>
        <begin position="404"/>
        <end position="446"/>
    </location>
</feature>
<keyword id="KW-0053">Apoptosis</keyword>
<keyword id="KW-0165">Cleavage on pair of basic residues</keyword>
<keyword id="KW-0175">Coiled coil</keyword>
<keyword id="KW-1015">Disulfide bond</keyword>
<keyword id="KW-1168">Fusion of virus membrane with host membrane</keyword>
<keyword id="KW-0325">Glycoprotein</keyword>
<keyword id="KW-1032">Host cell membrane</keyword>
<keyword id="KW-1039">Host endosome</keyword>
<keyword id="KW-1043">Host membrane</keyword>
<keyword id="KW-0945">Host-virus interaction</keyword>
<keyword id="KW-0472">Membrane</keyword>
<keyword id="KW-0732">Signal</keyword>
<keyword id="KW-0812">Transmembrane</keyword>
<keyword id="KW-1133">Transmembrane helix</keyword>
<keyword id="KW-1161">Viral attachment to host cell</keyword>
<keyword id="KW-0261">Viral envelope protein</keyword>
<keyword id="KW-1162">Viral penetration into host cytoplasm</keyword>
<keyword id="KW-0946">Virion</keyword>
<keyword id="KW-1160">Virus entry into host cell</keyword>
<name>ENV_SIVV1</name>
<accession>P27757</accession>